<dbReference type="EC" id="1.14.14.1" evidence="2 3 4"/>
<dbReference type="EMBL" id="D00408">
    <property type="protein sequence ID" value="BAA00310.1"/>
    <property type="molecule type" value="mRNA"/>
</dbReference>
<dbReference type="EMBL" id="AF315325">
    <property type="protein sequence ID" value="AAG48618.1"/>
    <property type="molecule type" value="mRNA"/>
</dbReference>
<dbReference type="EMBL" id="AF280107">
    <property type="protein sequence ID" value="AAG32289.1"/>
    <property type="molecule type" value="Genomic_DNA"/>
</dbReference>
<dbReference type="EMBL" id="CH236956">
    <property type="protein sequence ID" value="EAL23867.1"/>
    <property type="molecule type" value="Genomic_DNA"/>
</dbReference>
<dbReference type="EMBL" id="CH471091">
    <property type="protein sequence ID" value="EAW76637.1"/>
    <property type="molecule type" value="Genomic_DNA"/>
</dbReference>
<dbReference type="EMBL" id="BC067436">
    <property type="protein sequence ID" value="AAH67436.1"/>
    <property type="molecule type" value="mRNA"/>
</dbReference>
<dbReference type="CCDS" id="CCDS5673.1">
    <molecule id="P24462-1"/>
</dbReference>
<dbReference type="PIR" id="JX0062">
    <property type="entry name" value="JX0062"/>
</dbReference>
<dbReference type="RefSeq" id="NP_000756.3">
    <molecule id="P24462-1"/>
    <property type="nucleotide sequence ID" value="NM_000765.5"/>
</dbReference>
<dbReference type="RefSeq" id="NP_001243426.2">
    <molecule id="P24462-2"/>
    <property type="nucleotide sequence ID" value="NM_001256497.2"/>
</dbReference>
<dbReference type="PDB" id="7MK8">
    <property type="method" value="X-ray"/>
    <property type="resolution" value="2.15 A"/>
    <property type="chains" value="A/B=23-499"/>
</dbReference>
<dbReference type="PDBsum" id="7MK8"/>
<dbReference type="SMR" id="P24462"/>
<dbReference type="BioGRID" id="107930">
    <property type="interactions" value="5"/>
</dbReference>
<dbReference type="FunCoup" id="P24462">
    <property type="interactions" value="194"/>
</dbReference>
<dbReference type="IntAct" id="P24462">
    <property type="interactions" value="5"/>
</dbReference>
<dbReference type="STRING" id="9606.ENSP00000337450"/>
<dbReference type="BindingDB" id="P24462"/>
<dbReference type="ChEMBL" id="CHEMBL3341582"/>
<dbReference type="DrugBank" id="DB11703">
    <property type="generic name" value="Acalabrutinib"/>
</dbReference>
<dbReference type="DrugBank" id="DB00802">
    <property type="generic name" value="Alfentanil"/>
</dbReference>
<dbReference type="DrugBank" id="DB00404">
    <property type="generic name" value="Alprazolam"/>
</dbReference>
<dbReference type="DrugBank" id="DB13141">
    <property type="generic name" value="Ambroxol acefyllinate"/>
</dbReference>
<dbReference type="DrugBank" id="DB01238">
    <property type="generic name" value="Aripiprazole"/>
</dbReference>
<dbReference type="DrugBank" id="DB14185">
    <property type="generic name" value="Aripiprazole lauroxil"/>
</dbReference>
<dbReference type="DrugBank" id="DB00637">
    <property type="generic name" value="Astemizole"/>
</dbReference>
<dbReference type="DrugBank" id="DB01072">
    <property type="generic name" value="Atazanavir"/>
</dbReference>
<dbReference type="DrugBank" id="DB01076">
    <property type="generic name" value="Atorvastatin"/>
</dbReference>
<dbReference type="DrugBank" id="DB00443">
    <property type="generic name" value="Betamethasone"/>
</dbReference>
<dbReference type="DrugBank" id="DB16536">
    <property type="generic name" value="Birch bark extract"/>
</dbReference>
<dbReference type="DrugBank" id="DB12267">
    <property type="generic name" value="Brigatinib"/>
</dbReference>
<dbReference type="DrugBank" id="DB01222">
    <property type="generic name" value="Budesonide"/>
</dbReference>
<dbReference type="DrugBank" id="DB00921">
    <property type="generic name" value="Buprenorphine"/>
</dbReference>
<dbReference type="DrugBank" id="DB00490">
    <property type="generic name" value="Buspirone"/>
</dbReference>
<dbReference type="DrugBank" id="DB09061">
    <property type="generic name" value="Cannabidiol"/>
</dbReference>
<dbReference type="DrugBank" id="DB14737">
    <property type="generic name" value="Cannabinol"/>
</dbReference>
<dbReference type="DrugBank" id="DB00439">
    <property type="generic name" value="Cerivastatin"/>
</dbReference>
<dbReference type="DrugBank" id="DB00446">
    <property type="generic name" value="Chloramphenicol"/>
</dbReference>
<dbReference type="DrugBank" id="DB01114">
    <property type="generic name" value="Chlorpheniramine"/>
</dbReference>
<dbReference type="DrugBank" id="DB01166">
    <property type="generic name" value="Cilostazol"/>
</dbReference>
<dbReference type="DrugBank" id="DB00537">
    <property type="generic name" value="Ciprofloxacin"/>
</dbReference>
<dbReference type="DrugBank" id="DB00604">
    <property type="generic name" value="Cisapride"/>
</dbReference>
<dbReference type="DrugBank" id="DB00349">
    <property type="generic name" value="Clobazam"/>
</dbReference>
<dbReference type="DrugBank" id="DB00257">
    <property type="generic name" value="Clotrimazole"/>
</dbReference>
<dbReference type="DrugBank" id="DB09065">
    <property type="generic name" value="Cobicistat"/>
</dbReference>
<dbReference type="DrugBank" id="DB12483">
    <property type="generic name" value="Copanlisib"/>
</dbReference>
<dbReference type="DrugBank" id="DB08865">
    <property type="generic name" value="Crizotinib"/>
</dbReference>
<dbReference type="DrugBank" id="DB09102">
    <property type="generic name" value="Daclatasvir"/>
</dbReference>
<dbReference type="DrugBank" id="DB00250">
    <property type="generic name" value="Dapsone"/>
</dbReference>
<dbReference type="DrugBank" id="DB00705">
    <property type="generic name" value="Delavirdine"/>
</dbReference>
<dbReference type="DrugBank" id="DB01234">
    <property type="generic name" value="Dexamethasone"/>
</dbReference>
<dbReference type="DrugBank" id="DB14649">
    <property type="generic name" value="Dexamethasone acetate"/>
</dbReference>
<dbReference type="DrugBank" id="DB00514">
    <property type="generic name" value="Dextromethorphan"/>
</dbReference>
<dbReference type="DrugBank" id="DB00647">
    <property type="generic name" value="Dextropropoxyphene"/>
</dbReference>
<dbReference type="DrugBank" id="DB11994">
    <property type="generic name" value="Diacerein"/>
</dbReference>
<dbReference type="DrugBank" id="DB00829">
    <property type="generic name" value="Diazepam"/>
</dbReference>
<dbReference type="DrugBank" id="DB00343">
    <property type="generic name" value="Diltiazem"/>
</dbReference>
<dbReference type="DrugBank" id="DB01248">
    <property type="generic name" value="Docetaxel"/>
</dbReference>
<dbReference type="DrugBank" id="DB08930">
    <property type="generic name" value="Dolutegravir"/>
</dbReference>
<dbReference type="DrugBank" id="DB01184">
    <property type="generic name" value="Domperidone"/>
</dbReference>
<dbReference type="DrugBank" id="DB00470">
    <property type="generic name" value="Dronabinol"/>
</dbReference>
<dbReference type="DrugBank" id="DB11742">
    <property type="generic name" value="Ebastine"/>
</dbReference>
<dbReference type="DrugBank" id="DB00625">
    <property type="generic name" value="Efavirenz"/>
</dbReference>
<dbReference type="DrugBank" id="DB11979">
    <property type="generic name" value="Elagolix"/>
</dbReference>
<dbReference type="DrugBank" id="DB11574">
    <property type="generic name" value="Elbasvir"/>
</dbReference>
<dbReference type="DrugBank" id="DB11718">
    <property type="generic name" value="Encorafenib"/>
</dbReference>
<dbReference type="DrugBank" id="DB00199">
    <property type="generic name" value="Erythromycin"/>
</dbReference>
<dbReference type="DrugBank" id="DB00783">
    <property type="generic name" value="Estradiol"/>
</dbReference>
<dbReference type="DrugBank" id="DB13952">
    <property type="generic name" value="Estradiol acetate"/>
</dbReference>
<dbReference type="DrugBank" id="DB13953">
    <property type="generic name" value="Estradiol benzoate"/>
</dbReference>
<dbReference type="DrugBank" id="DB13954">
    <property type="generic name" value="Estradiol cypionate"/>
</dbReference>
<dbReference type="DrugBank" id="DB13955">
    <property type="generic name" value="Estradiol dienanthate"/>
</dbReference>
<dbReference type="DrugBank" id="DB13956">
    <property type="generic name" value="Estradiol valerate"/>
</dbReference>
<dbReference type="DrugBank" id="DB00593">
    <property type="generic name" value="Ethosuximide"/>
</dbReference>
<dbReference type="DrugBank" id="DB01023">
    <property type="generic name" value="Felodipine"/>
</dbReference>
<dbReference type="DrugBank" id="DB00813">
    <property type="generic name" value="Fentanyl"/>
</dbReference>
<dbReference type="DrugBank" id="DB01216">
    <property type="generic name" value="Finasteride"/>
</dbReference>
<dbReference type="DrugBank" id="DB13867">
    <property type="generic name" value="Fluticasone"/>
</dbReference>
<dbReference type="DrugBank" id="DB08906">
    <property type="generic name" value="Fluticasone furoate"/>
</dbReference>
<dbReference type="DrugBank" id="DB00588">
    <property type="generic name" value="Fluticasone propionate"/>
</dbReference>
<dbReference type="DrugBank" id="DB00176">
    <property type="generic name" value="Fluvoxamine"/>
</dbReference>
<dbReference type="DrugBank" id="DB12307">
    <property type="generic name" value="Foretinib"/>
</dbReference>
<dbReference type="DrugBank" id="DB11679">
    <property type="generic name" value="Fruquintinib"/>
</dbReference>
<dbReference type="DrugBank" id="DB06730">
    <property type="generic name" value="Gestodene"/>
</dbReference>
<dbReference type="DrugBank" id="DB13879">
    <property type="generic name" value="Glecaprevir"/>
</dbReference>
<dbReference type="DrugBank" id="DB01016">
    <property type="generic name" value="Glyburide"/>
</dbReference>
<dbReference type="DrugBank" id="DB00502">
    <property type="generic name" value="Haloperidol"/>
</dbReference>
<dbReference type="DrugBank" id="DB00741">
    <property type="generic name" value="Hydrocortisone"/>
</dbReference>
<dbReference type="DrugBank" id="DB14538">
    <property type="generic name" value="Hydrocortisone aceponate"/>
</dbReference>
<dbReference type="DrugBank" id="DB14539">
    <property type="generic name" value="Hydrocortisone acetate"/>
</dbReference>
<dbReference type="DrugBank" id="DB14540">
    <property type="generic name" value="Hydrocortisone butyrate"/>
</dbReference>
<dbReference type="DrugBank" id="DB14541">
    <property type="generic name" value="Hydrocortisone cypionate"/>
</dbReference>
<dbReference type="DrugBank" id="DB14542">
    <property type="generic name" value="Hydrocortisone phosphate"/>
</dbReference>
<dbReference type="DrugBank" id="DB14543">
    <property type="generic name" value="Hydrocortisone probutate"/>
</dbReference>
<dbReference type="DrugBank" id="DB14544">
    <property type="generic name" value="Hydrocortisone valerate"/>
</dbReference>
<dbReference type="DrugBank" id="DB09054">
    <property type="generic name" value="Idelalisib"/>
</dbReference>
<dbReference type="DrugBank" id="DB00619">
    <property type="generic name" value="Imatinib"/>
</dbReference>
<dbReference type="DrugBank" id="DB00458">
    <property type="generic name" value="Imipramine"/>
</dbReference>
<dbReference type="DrugBank" id="DB15275">
    <property type="generic name" value="Inavolisib"/>
</dbReference>
<dbReference type="DrugBank" id="DB00224">
    <property type="generic name" value="Indinavir"/>
</dbReference>
<dbReference type="DrugBank" id="DB00762">
    <property type="generic name" value="Irinotecan"/>
</dbReference>
<dbReference type="DrugBank" id="DB11757">
    <property type="generic name" value="Istradefylline"/>
</dbReference>
<dbReference type="DrugBank" id="DB01167">
    <property type="generic name" value="Itraconazole"/>
</dbReference>
<dbReference type="DrugBank" id="DB11951">
    <property type="generic name" value="Lemborexant"/>
</dbReference>
<dbReference type="DrugBank" id="DB00528">
    <property type="generic name" value="Lercanidipine"/>
</dbReference>
<dbReference type="DrugBank" id="DB12070">
    <property type="generic name" value="Letermovir"/>
</dbReference>
<dbReference type="DrugBank" id="DB01227">
    <property type="generic name" value="Levacetylmethadol"/>
</dbReference>
<dbReference type="DrugBank" id="DB00281">
    <property type="generic name" value="Lidocaine"/>
</dbReference>
<dbReference type="DrugBank" id="DB06448">
    <property type="generic name" value="Lonafarnib"/>
</dbReference>
<dbReference type="DrugBank" id="DB01601">
    <property type="generic name" value="Lopinavir"/>
</dbReference>
<dbReference type="DrugBank" id="DB12130">
    <property type="generic name" value="Lorlatinib"/>
</dbReference>
<dbReference type="DrugBank" id="DB09212">
    <property type="generic name" value="Loxoprofen"/>
</dbReference>
<dbReference type="DrugBank" id="DB00643">
    <property type="generic name" value="Mebendazole"/>
</dbReference>
<dbReference type="DrugBank" id="DB14009">
    <property type="generic name" value="Medical Cannabis"/>
</dbReference>
<dbReference type="DrugBank" id="DB00170">
    <property type="generic name" value="Menadione"/>
</dbReference>
<dbReference type="DrugBank" id="DB00333">
    <property type="generic name" value="Methadone"/>
</dbReference>
<dbReference type="DrugBank" id="DB00959">
    <property type="generic name" value="Methylprednisolone"/>
</dbReference>
<dbReference type="DrugBank" id="DB00916">
    <property type="generic name" value="Metronidazole"/>
</dbReference>
<dbReference type="DrugBank" id="DB01388">
    <property type="generic name" value="Mibefradil"/>
</dbReference>
<dbReference type="DrugBank" id="DB00683">
    <property type="generic name" value="Midazolam"/>
</dbReference>
<dbReference type="DrugBank" id="DB06595">
    <property type="generic name" value="Midostaurin"/>
</dbReference>
<dbReference type="DrugBank" id="DB11792">
    <property type="generic name" value="Mirodenafil"/>
</dbReference>
<dbReference type="DrugBank" id="DB00648">
    <property type="generic name" value="Mitotane"/>
</dbReference>
<dbReference type="DrugBank" id="DB16390">
    <property type="generic name" value="Mobocertinib"/>
</dbReference>
<dbReference type="DrugBank" id="DB09205">
    <property type="generic name" value="Moxisylyte"/>
</dbReference>
<dbReference type="DrugBank" id="DB11605">
    <property type="generic name" value="Myrrh"/>
</dbReference>
<dbReference type="DrugBank" id="DB14011">
    <property type="generic name" value="Nabiximols"/>
</dbReference>
<dbReference type="DrugBank" id="DB11691">
    <property type="generic name" value="Naldemedine"/>
</dbReference>
<dbReference type="DrugBank" id="DB00731">
    <property type="generic name" value="Nateglinide"/>
</dbReference>
<dbReference type="DrugBank" id="DB01149">
    <property type="generic name" value="Nefazodone"/>
</dbReference>
<dbReference type="DrugBank" id="DB00220">
    <property type="generic name" value="Nelfinavir"/>
</dbReference>
<dbReference type="DrugBank" id="DB00238">
    <property type="generic name" value="Nevirapine"/>
</dbReference>
<dbReference type="DrugBank" id="DB00401">
    <property type="generic name" value="Nisoldipine"/>
</dbReference>
<dbReference type="DrugBank" id="DB01054">
    <property type="generic name" value="Nitrendipine"/>
</dbReference>
<dbReference type="DrugBank" id="DB01059">
    <property type="generic name" value="Norfloxacin"/>
</dbReference>
<dbReference type="DrugBank" id="DB00334">
    <property type="generic name" value="Olanzapine"/>
</dbReference>
<dbReference type="DrugBank" id="DB09568">
    <property type="generic name" value="Omega-3-carboxylic acids"/>
</dbReference>
<dbReference type="DrugBank" id="DB00904">
    <property type="generic name" value="Ondansetron"/>
</dbReference>
<dbReference type="DrugBank" id="DB06412">
    <property type="generic name" value="Oxymetholone"/>
</dbReference>
<dbReference type="DrugBank" id="DB01229">
    <property type="generic name" value="Paclitaxel"/>
</dbReference>
<dbReference type="DrugBank" id="DB00780">
    <property type="generic name" value="Phenelzine"/>
</dbReference>
<dbReference type="DrugBank" id="DB01174">
    <property type="generic name" value="Phenobarbital"/>
</dbReference>
<dbReference type="DrugBank" id="DB00252">
    <property type="generic name" value="Phenytoin"/>
</dbReference>
<dbReference type="DrugBank" id="DB13878">
    <property type="generic name" value="Pibrentasvir"/>
</dbReference>
<dbReference type="DrugBank" id="DB01100">
    <property type="generic name" value="Pimozide"/>
</dbReference>
<dbReference type="DrugBank" id="DB01708">
    <property type="generic name" value="Prasterone"/>
</dbReference>
<dbReference type="DrugBank" id="DB05804">
    <property type="generic name" value="Prasterone sulfate"/>
</dbReference>
<dbReference type="DrugBank" id="DB14631">
    <property type="generic name" value="Prednisolone phosphate"/>
</dbReference>
<dbReference type="DrugBank" id="DB00635">
    <property type="generic name" value="Prednisone"/>
</dbReference>
<dbReference type="DrugBank" id="DB00396">
    <property type="generic name" value="Progesterone"/>
</dbReference>
<dbReference type="DrugBank" id="DB00571">
    <property type="generic name" value="Propranolol"/>
</dbReference>
<dbReference type="DrugBank" id="DB04216">
    <property type="generic name" value="Quercetin"/>
</dbReference>
<dbReference type="DrugBank" id="DB01224">
    <property type="generic name" value="Quetiapine"/>
</dbReference>
<dbReference type="DrugBank" id="DB00908">
    <property type="generic name" value="Quinidine"/>
</dbReference>
<dbReference type="DrugBank" id="DB00468">
    <property type="generic name" value="Quinine"/>
</dbReference>
<dbReference type="DrugBank" id="DB12874">
    <property type="generic name" value="Quizartinib"/>
</dbReference>
<dbReference type="DrugBank" id="DB11853">
    <property type="generic name" value="Relugolix"/>
</dbReference>
<dbReference type="DrugBank" id="DB00409">
    <property type="generic name" value="Remoxipride"/>
</dbReference>
<dbReference type="DrugBank" id="DB13174">
    <property type="generic name" value="Rhein"/>
</dbReference>
<dbReference type="DrugBank" id="DB01045">
    <property type="generic name" value="Rifampin"/>
</dbReference>
<dbReference type="DrugBank" id="DB01201">
    <property type="generic name" value="Rifapentine"/>
</dbReference>
<dbReference type="DrugBank" id="DB15305">
    <property type="generic name" value="Risdiplam"/>
</dbReference>
<dbReference type="DrugBank" id="DB00503">
    <property type="generic name" value="Ritonavir"/>
</dbReference>
<dbReference type="DrugBank" id="DB12332">
    <property type="generic name" value="Rucaparib"/>
</dbReference>
<dbReference type="DrugBank" id="DB00938">
    <property type="generic name" value="Salmeterol"/>
</dbReference>
<dbReference type="DrugBank" id="DB01232">
    <property type="generic name" value="Saquinavir"/>
</dbReference>
<dbReference type="DrugBank" id="DB15685">
    <property type="generic name" value="Selpercatinib"/>
</dbReference>
<dbReference type="DrugBank" id="DB06731">
    <property type="generic name" value="Seproxetine"/>
</dbReference>
<dbReference type="DrugBank" id="DB00203">
    <property type="generic name" value="Sildenafil"/>
</dbReference>
<dbReference type="DrugBank" id="DB00877">
    <property type="generic name" value="Sirolimus"/>
</dbReference>
<dbReference type="DrugBank" id="DB00398">
    <property type="generic name" value="Sorafenib"/>
</dbReference>
<dbReference type="DrugBank" id="DB15569">
    <property type="generic name" value="Sotorasib"/>
</dbReference>
<dbReference type="DrugBank" id="DB01268">
    <property type="generic name" value="Sunitinib"/>
</dbReference>
<dbReference type="DrugBank" id="DB00675">
    <property type="generic name" value="Tamoxifen"/>
</dbReference>
<dbReference type="DrugBank" id="DB12887">
    <property type="generic name" value="Tazemetostat"/>
</dbReference>
<dbReference type="DrugBank" id="DB06287">
    <property type="generic name" value="Temsirolimus"/>
</dbReference>
<dbReference type="DrugBank" id="DB00342">
    <property type="generic name" value="Terfenadine"/>
</dbReference>
<dbReference type="DrugBank" id="DB00624">
    <property type="generic name" value="Testosterone"/>
</dbReference>
<dbReference type="DrugBank" id="DB13943">
    <property type="generic name" value="Testosterone cypionate"/>
</dbReference>
<dbReference type="DrugBank" id="DB13944">
    <property type="generic name" value="Testosterone enanthate"/>
</dbReference>
<dbReference type="DrugBank" id="DB13946">
    <property type="generic name" value="Testosterone undecanoate"/>
</dbReference>
<dbReference type="DrugBank" id="DB00599">
    <property type="generic name" value="Thiopental"/>
</dbReference>
<dbReference type="DrugBank" id="DB00656">
    <property type="generic name" value="Trazodone"/>
</dbReference>
<dbReference type="DrugBank" id="DB00755">
    <property type="generic name" value="Tretinoin"/>
</dbReference>
<dbReference type="DrugBank" id="DB00620">
    <property type="generic name" value="Triamcinolone"/>
</dbReference>
<dbReference type="DrugBank" id="DB00897">
    <property type="generic name" value="Triazolam"/>
</dbReference>
<dbReference type="DrugBank" id="DB00197">
    <property type="generic name" value="Troglitazone"/>
</dbReference>
<dbReference type="DrugBank" id="DB13179">
    <property type="generic name" value="Troleandomycin"/>
</dbReference>
<dbReference type="DrugBank" id="DB11652">
    <property type="generic name" value="Tucatinib"/>
</dbReference>
<dbReference type="DrugBank" id="DB01586">
    <property type="generic name" value="Ursodeoxycholic acid"/>
</dbReference>
<dbReference type="DrugBank" id="DB00541">
    <property type="generic name" value="Vincristine"/>
</dbReference>
<dbReference type="DrugBank" id="DB00582">
    <property type="generic name" value="Voriconazole"/>
</dbReference>
<dbReference type="DrugBank" id="DB00962">
    <property type="generic name" value="Zaleplon"/>
</dbReference>
<dbReference type="DrugBank" id="DB15035">
    <property type="generic name" value="Zanubrutinib"/>
</dbReference>
<dbReference type="DrugCentral" id="P24462"/>
<dbReference type="SwissLipids" id="SLP:000001324"/>
<dbReference type="GlyGen" id="P24462">
    <property type="glycosylation" value="1 site"/>
</dbReference>
<dbReference type="iPTMnet" id="P24462"/>
<dbReference type="PhosphoSitePlus" id="P24462"/>
<dbReference type="BioMuta" id="CYP3A7"/>
<dbReference type="DMDM" id="90110014"/>
<dbReference type="jPOST" id="P24462"/>
<dbReference type="MassIVE" id="P24462"/>
<dbReference type="PaxDb" id="9606-ENSP00000480571"/>
<dbReference type="PeptideAtlas" id="P24462"/>
<dbReference type="ProteomicsDB" id="54205">
    <molecule id="P24462-1"/>
</dbReference>
<dbReference type="Antibodypedia" id="16242">
    <property type="antibodies" value="238 antibodies from 28 providers"/>
</dbReference>
<dbReference type="DNASU" id="1551"/>
<dbReference type="Ensembl" id="ENST00000336374.4">
    <molecule id="P24462-1"/>
    <property type="protein sequence ID" value="ENSP00000337450.2"/>
    <property type="gene ID" value="ENSG00000160870.15"/>
</dbReference>
<dbReference type="GeneID" id="100861540"/>
<dbReference type="GeneID" id="1551"/>
<dbReference type="KEGG" id="hsa:100861540"/>
<dbReference type="KEGG" id="hsa:1551"/>
<dbReference type="MANE-Select" id="ENST00000336374.4">
    <property type="protein sequence ID" value="ENSP00000337450.2"/>
    <property type="RefSeq nucleotide sequence ID" value="NM_000765.5"/>
    <property type="RefSeq protein sequence ID" value="NP_000756.3"/>
</dbReference>
<dbReference type="UCSC" id="uc003uru.4">
    <molecule id="P24462-1"/>
    <property type="organism name" value="human"/>
</dbReference>
<dbReference type="AGR" id="HGNC:2640"/>
<dbReference type="AGR" id="HGNC:51504"/>
<dbReference type="CTD" id="100861540"/>
<dbReference type="CTD" id="1551"/>
<dbReference type="DisGeNET" id="1551"/>
<dbReference type="GeneCards" id="CYP3A7"/>
<dbReference type="HGNC" id="HGNC:2640">
    <property type="gene designation" value="CYP3A7"/>
</dbReference>
<dbReference type="HPA" id="ENSG00000160870">
    <property type="expression patterns" value="Tissue enriched (liver)"/>
</dbReference>
<dbReference type="MIM" id="605340">
    <property type="type" value="gene"/>
</dbReference>
<dbReference type="neXtProt" id="NX_P24462"/>
<dbReference type="OpenTargets" id="ENSG00000160870"/>
<dbReference type="OpenTargets" id="ENSG00000282301"/>
<dbReference type="PharmGKB" id="PA122"/>
<dbReference type="VEuPathDB" id="HostDB:ENSG00000160870"/>
<dbReference type="eggNOG" id="KOG0158">
    <property type="taxonomic scope" value="Eukaryota"/>
</dbReference>
<dbReference type="GeneTree" id="ENSGT00950000182958"/>
<dbReference type="HOGENOM" id="CLU_001570_5_2_1"/>
<dbReference type="InParanoid" id="P24462"/>
<dbReference type="OMA" id="VRMYNFT"/>
<dbReference type="OrthoDB" id="1470350at2759"/>
<dbReference type="PAN-GO" id="P24462">
    <property type="GO annotations" value="4 GO annotations based on evolutionary models"/>
</dbReference>
<dbReference type="PhylomeDB" id="P24462"/>
<dbReference type="TreeFam" id="TF105087"/>
<dbReference type="BRENDA" id="1.14.14.1">
    <property type="organism ID" value="2681"/>
</dbReference>
<dbReference type="PathwayCommons" id="P24462"/>
<dbReference type="Reactome" id="R-HSA-211981">
    <property type="pathway name" value="Xenobiotics"/>
</dbReference>
<dbReference type="SABIO-RK" id="P24462"/>
<dbReference type="SignaLink" id="P24462"/>
<dbReference type="UniPathway" id="UPA00912"/>
<dbReference type="BioGRID-ORCS" id="100861540">
    <property type="hits" value="4 hits in 199 CRISPR screens"/>
</dbReference>
<dbReference type="BioGRID-ORCS" id="1551">
    <property type="hits" value="4 hits in 1075 CRISPR screens"/>
</dbReference>
<dbReference type="GeneWiki" id="CYP3A7"/>
<dbReference type="Pharos" id="P24462">
    <property type="development level" value="Tclin"/>
</dbReference>
<dbReference type="PRO" id="PR:P24462"/>
<dbReference type="Proteomes" id="UP000005640">
    <property type="component" value="Chromosome 7"/>
</dbReference>
<dbReference type="RNAct" id="P24462">
    <property type="molecule type" value="protein"/>
</dbReference>
<dbReference type="Bgee" id="ENSG00000160870">
    <property type="expression patterns" value="Expressed in buccal mucosa cell and 134 other cell types or tissues"/>
</dbReference>
<dbReference type="GO" id="GO:0005789">
    <property type="term" value="C:endoplasmic reticulum membrane"/>
    <property type="evidence" value="ECO:0000304"/>
    <property type="project" value="Reactome"/>
</dbReference>
<dbReference type="GO" id="GO:0062183">
    <property type="term" value="F:all-trans retinoic acid 18-hydroxylase activity"/>
    <property type="evidence" value="ECO:0007669"/>
    <property type="project" value="RHEA"/>
</dbReference>
<dbReference type="GO" id="GO:0101020">
    <property type="term" value="F:estrogen 16-alpha-hydroxylase activity"/>
    <property type="evidence" value="ECO:0000314"/>
    <property type="project" value="BHF-UCL"/>
</dbReference>
<dbReference type="GO" id="GO:0101021">
    <property type="term" value="F:estrogen 2-hydroxylase activity"/>
    <property type="evidence" value="ECO:0000314"/>
    <property type="project" value="UniProtKB"/>
</dbReference>
<dbReference type="GO" id="GO:0020037">
    <property type="term" value="F:heme binding"/>
    <property type="evidence" value="ECO:0007669"/>
    <property type="project" value="InterPro"/>
</dbReference>
<dbReference type="GO" id="GO:0005506">
    <property type="term" value="F:iron ion binding"/>
    <property type="evidence" value="ECO:0007669"/>
    <property type="project" value="InterPro"/>
</dbReference>
<dbReference type="GO" id="GO:0004497">
    <property type="term" value="F:monooxygenase activity"/>
    <property type="evidence" value="ECO:0000250"/>
    <property type="project" value="UniProtKB"/>
</dbReference>
<dbReference type="GO" id="GO:0019825">
    <property type="term" value="F:oxygen binding"/>
    <property type="evidence" value="ECO:0000304"/>
    <property type="project" value="ProtInc"/>
</dbReference>
<dbReference type="GO" id="GO:0008401">
    <property type="term" value="F:retinoic acid 4-hydroxylase activity"/>
    <property type="evidence" value="ECO:0000314"/>
    <property type="project" value="UniProtKB"/>
</dbReference>
<dbReference type="GO" id="GO:0008395">
    <property type="term" value="F:steroid hydroxylase activity"/>
    <property type="evidence" value="ECO:0000314"/>
    <property type="project" value="BHF-UCL"/>
</dbReference>
<dbReference type="GO" id="GO:0050649">
    <property type="term" value="F:testosterone 6-beta-hydroxylase activity"/>
    <property type="evidence" value="ECO:0000318"/>
    <property type="project" value="GO_Central"/>
</dbReference>
<dbReference type="GO" id="GO:0008210">
    <property type="term" value="P:estrogen metabolic process"/>
    <property type="evidence" value="ECO:0000314"/>
    <property type="project" value="UniProtKB"/>
</dbReference>
<dbReference type="GO" id="GO:0002933">
    <property type="term" value="P:lipid hydroxylation"/>
    <property type="evidence" value="ECO:0000314"/>
    <property type="project" value="BHF-UCL"/>
</dbReference>
<dbReference type="GO" id="GO:0070989">
    <property type="term" value="P:oxidative demethylation"/>
    <property type="evidence" value="ECO:0000318"/>
    <property type="project" value="GO_Central"/>
</dbReference>
<dbReference type="GO" id="GO:0042573">
    <property type="term" value="P:retinoic acid metabolic process"/>
    <property type="evidence" value="ECO:0000314"/>
    <property type="project" value="UniProtKB"/>
</dbReference>
<dbReference type="GO" id="GO:0042572">
    <property type="term" value="P:retinol metabolic process"/>
    <property type="evidence" value="ECO:0007669"/>
    <property type="project" value="UniProtKB-UniPathway"/>
</dbReference>
<dbReference type="GO" id="GO:0006694">
    <property type="term" value="P:steroid biosynthetic process"/>
    <property type="evidence" value="ECO:0007669"/>
    <property type="project" value="UniProtKB-KW"/>
</dbReference>
<dbReference type="GO" id="GO:0008202">
    <property type="term" value="P:steroid metabolic process"/>
    <property type="evidence" value="ECO:0000314"/>
    <property type="project" value="BHF-UCL"/>
</dbReference>
<dbReference type="GO" id="GO:0006805">
    <property type="term" value="P:xenobiotic metabolic process"/>
    <property type="evidence" value="ECO:0000304"/>
    <property type="project" value="Reactome"/>
</dbReference>
<dbReference type="CDD" id="cd20650">
    <property type="entry name" value="CYP3A"/>
    <property type="match status" value="1"/>
</dbReference>
<dbReference type="FunFam" id="1.10.630.10:FF:000096">
    <property type="entry name" value="Cytochrome P450 3A4"/>
    <property type="match status" value="1"/>
</dbReference>
<dbReference type="Gene3D" id="1.10.630.10">
    <property type="entry name" value="Cytochrome P450"/>
    <property type="match status" value="1"/>
</dbReference>
<dbReference type="InterPro" id="IPR001128">
    <property type="entry name" value="Cyt_P450"/>
</dbReference>
<dbReference type="InterPro" id="IPR017972">
    <property type="entry name" value="Cyt_P450_CS"/>
</dbReference>
<dbReference type="InterPro" id="IPR008072">
    <property type="entry name" value="Cyt_P450_E_CYP3A"/>
</dbReference>
<dbReference type="InterPro" id="IPR002402">
    <property type="entry name" value="Cyt_P450_E_grp-II"/>
</dbReference>
<dbReference type="InterPro" id="IPR036396">
    <property type="entry name" value="Cyt_P450_sf"/>
</dbReference>
<dbReference type="InterPro" id="IPR050705">
    <property type="entry name" value="Cytochrome_P450_3A"/>
</dbReference>
<dbReference type="PANTHER" id="PTHR24302:SF31">
    <property type="entry name" value="CYTOCHROME P450 3A7"/>
    <property type="match status" value="1"/>
</dbReference>
<dbReference type="PANTHER" id="PTHR24302">
    <property type="entry name" value="CYTOCHROME P450 FAMILY 3"/>
    <property type="match status" value="1"/>
</dbReference>
<dbReference type="Pfam" id="PF00067">
    <property type="entry name" value="p450"/>
    <property type="match status" value="1"/>
</dbReference>
<dbReference type="PRINTS" id="PR00464">
    <property type="entry name" value="EP450II"/>
</dbReference>
<dbReference type="PRINTS" id="PR01689">
    <property type="entry name" value="EP450IICYP3A"/>
</dbReference>
<dbReference type="PRINTS" id="PR00385">
    <property type="entry name" value="P450"/>
</dbReference>
<dbReference type="SUPFAM" id="SSF48264">
    <property type="entry name" value="Cytochrome P450"/>
    <property type="match status" value="1"/>
</dbReference>
<dbReference type="PROSITE" id="PS00086">
    <property type="entry name" value="CYTOCHROME_P450"/>
    <property type="match status" value="1"/>
</dbReference>
<gene>
    <name evidence="9 18" type="primary">CYP3A7</name>
</gene>
<sequence length="503" mass="57470">MDLIPNLAVETWLLLAVSLILLYLYGTRTHGLFKKLGIPGPTPLPFLGNALSFRKGYWTFDMECYKKYRKVWGIYDCQQPMLAITDPDMIKTVLVKECYSVFTNRRPFGPVGFMKNAISIAEDEEWKRIRSLLSPTFTSGKLKEMVPIIAQYGDVLVRNLRREAETGKPVTLKHVFGAYSMDVITSTSFGVSIDSLNNPQDPFVENTKKLLRFNPLDPFVLSIKVFPFLTPILEALNITVFPRKVISFLTKSVKQIKEGRLKETQKHRVDFLQLMIDSQNSKDSETHKALSDLELMAQSIIFIFAGYETTSSVLSFIIYELATHPDVQQKVQKEIDTVLPNKAPPTYDTVLQLEYLDMVVNETLRLFPVAMRLERVCKKDVEINGMFIPKGVVVMIPSYVLHHDPKYWTEPEKFLPERFSKKNKDNIDPYIYTPFGSGPRNCIGMRFALVNMKLALVRVLQNFSFKPCKETQIPLKLRFGGLLLTEKPIVLKAESRDETVSGA</sequence>
<keyword id="KW-0002">3D-structure</keyword>
<keyword id="KW-0025">Alternative splicing</keyword>
<keyword id="KW-0903">Direct protein sequencing</keyword>
<keyword id="KW-0256">Endoplasmic reticulum</keyword>
<keyword id="KW-0349">Heme</keyword>
<keyword id="KW-0408">Iron</keyword>
<keyword id="KW-0444">Lipid biosynthesis</keyword>
<keyword id="KW-0443">Lipid metabolism</keyword>
<keyword id="KW-0472">Membrane</keyword>
<keyword id="KW-0479">Metal-binding</keyword>
<keyword id="KW-0492">Microsome</keyword>
<keyword id="KW-0503">Monooxygenase</keyword>
<keyword id="KW-0560">Oxidoreductase</keyword>
<keyword id="KW-1267">Proteomics identification</keyword>
<keyword id="KW-1185">Reference proteome</keyword>
<keyword id="KW-0752">Steroid biosynthesis</keyword>
<proteinExistence type="evidence at protein level"/>
<accession>P24462</accession>
<accession>A4D288</accession>
<accession>Q9H241</accession>
<feature type="chain" id="PRO_0000051790" description="Cytochrome P450 3A7">
    <location>
        <begin position="1"/>
        <end position="503"/>
    </location>
</feature>
<feature type="binding site" description="axial binding residue" evidence="1">
    <location>
        <position position="442"/>
    </location>
    <ligand>
        <name>heme</name>
        <dbReference type="ChEBI" id="CHEBI:30413"/>
    </ligand>
    <ligandPart>
        <name>Fe</name>
        <dbReference type="ChEBI" id="CHEBI:18248"/>
    </ligandPart>
</feature>
<feature type="splice variant" id="VSP_055577" description="In isoform 2." evidence="8">
    <original>VSGA</original>
    <variation>FVDMEPIHMDFLRSLAFQGPHLCFFWELLCPTIRSR</variation>
    <location>
        <begin position="500"/>
        <end position="503"/>
    </location>
</feature>
<feature type="sequence variant" id="VAR_055564" description="In dbSNP:rs45580339.">
    <original>V</original>
    <variation>A</variation>
    <location>
        <position position="71"/>
    </location>
</feature>
<feature type="sequence variant" id="VAR_020124" description="In dbSNP:rs2257401.">
    <original>T</original>
    <variation>R</variation>
    <location>
        <position position="409"/>
    </location>
</feature>
<feature type="mutagenesis site" description="Has no effect on catalytic activity." evidence="5">
    <original>N</original>
    <variation>S</variation>
    <location>
        <position position="116"/>
    </location>
</feature>
<feature type="mutagenesis site" description="Increases catalytic activity." evidence="5">
    <original>H</original>
    <variation>D</variation>
    <location>
        <position position="174"/>
    </location>
</feature>
<feature type="mutagenesis site" description="Increases catalytic activity." evidence="5">
    <original>N</original>
    <variation>D</variation>
    <location>
        <position position="214"/>
    </location>
</feature>
<feature type="mutagenesis site" description="Reduces affinity for substrate and catalytic efficiency." evidence="5">
    <original>K</original>
    <variation>T</variation>
    <location>
        <position position="224"/>
    </location>
</feature>
<feature type="mutagenesis site" description="Reduces affinity for substrate and catalytic efficiency." evidence="5">
    <original>K</original>
    <variation>E</variation>
    <location>
        <position position="244"/>
    </location>
</feature>
<feature type="mutagenesis site" description="Has no effect on catalytic activity." evidence="5">
    <original>K</original>
    <variation>E</variation>
    <location>
        <position position="262"/>
    </location>
</feature>
<feature type="helix" evidence="19">
    <location>
        <begin position="32"/>
        <end position="36"/>
    </location>
</feature>
<feature type="turn" evidence="19">
    <location>
        <begin position="45"/>
        <end position="47"/>
    </location>
</feature>
<feature type="helix" evidence="19">
    <location>
        <begin position="50"/>
        <end position="53"/>
    </location>
</feature>
<feature type="helix" evidence="19">
    <location>
        <begin position="57"/>
        <end position="68"/>
    </location>
</feature>
<feature type="strand" evidence="19">
    <location>
        <begin position="70"/>
        <end position="76"/>
    </location>
</feature>
<feature type="strand" evidence="19">
    <location>
        <begin position="79"/>
        <end position="84"/>
    </location>
</feature>
<feature type="helix" evidence="19">
    <location>
        <begin position="87"/>
        <end position="94"/>
    </location>
</feature>
<feature type="turn" evidence="19">
    <location>
        <begin position="95"/>
        <end position="101"/>
    </location>
</feature>
<feature type="helix" evidence="19">
    <location>
        <begin position="113"/>
        <end position="116"/>
    </location>
</feature>
<feature type="turn" evidence="19">
    <location>
        <begin position="118"/>
        <end position="120"/>
    </location>
</feature>
<feature type="helix" evidence="19">
    <location>
        <begin position="123"/>
        <end position="133"/>
    </location>
</feature>
<feature type="helix" evidence="19">
    <location>
        <begin position="134"/>
        <end position="137"/>
    </location>
</feature>
<feature type="helix" evidence="19">
    <location>
        <begin position="139"/>
        <end position="164"/>
    </location>
</feature>
<feature type="helix" evidence="19">
    <location>
        <begin position="172"/>
        <end position="189"/>
    </location>
</feature>
<feature type="turn" evidence="19">
    <location>
        <begin position="195"/>
        <end position="197"/>
    </location>
</feature>
<feature type="helix" evidence="19">
    <location>
        <begin position="202"/>
        <end position="211"/>
    </location>
</feature>
<feature type="helix" evidence="19">
    <location>
        <begin position="220"/>
        <end position="223"/>
    </location>
</feature>
<feature type="helix" evidence="19">
    <location>
        <begin position="227"/>
        <end position="229"/>
    </location>
</feature>
<feature type="helix" evidence="19">
    <location>
        <begin position="230"/>
        <end position="235"/>
    </location>
</feature>
<feature type="helix" evidence="19">
    <location>
        <begin position="243"/>
        <end position="260"/>
    </location>
</feature>
<feature type="helix" evidence="19">
    <location>
        <begin position="271"/>
        <end position="277"/>
    </location>
</feature>
<feature type="helix" evidence="19">
    <location>
        <begin position="292"/>
        <end position="323"/>
    </location>
</feature>
<feature type="helix" evidence="19">
    <location>
        <begin position="325"/>
        <end position="338"/>
    </location>
</feature>
<feature type="helix" evidence="19">
    <location>
        <begin position="340"/>
        <end position="342"/>
    </location>
</feature>
<feature type="helix" evidence="19">
    <location>
        <begin position="347"/>
        <end position="350"/>
    </location>
</feature>
<feature type="helix" evidence="19">
    <location>
        <begin position="354"/>
        <end position="366"/>
    </location>
</feature>
<feature type="strand" evidence="19">
    <location>
        <begin position="373"/>
        <end position="376"/>
    </location>
</feature>
<feature type="strand" evidence="19">
    <location>
        <begin position="381"/>
        <end position="383"/>
    </location>
</feature>
<feature type="strand" evidence="19">
    <location>
        <begin position="386"/>
        <end position="388"/>
    </location>
</feature>
<feature type="strand" evidence="19">
    <location>
        <begin position="393"/>
        <end position="396"/>
    </location>
</feature>
<feature type="helix" evidence="19">
    <location>
        <begin position="398"/>
        <end position="402"/>
    </location>
</feature>
<feature type="turn" evidence="19">
    <location>
        <begin position="405"/>
        <end position="407"/>
    </location>
</feature>
<feature type="strand" evidence="19">
    <location>
        <begin position="408"/>
        <end position="410"/>
    </location>
</feature>
<feature type="helix" evidence="19">
    <location>
        <begin position="416"/>
        <end position="419"/>
    </location>
</feature>
<feature type="helix" evidence="19">
    <location>
        <begin position="421"/>
        <end position="426"/>
    </location>
</feature>
<feature type="turn" evidence="19">
    <location>
        <begin position="429"/>
        <end position="431"/>
    </location>
</feature>
<feature type="helix" evidence="19">
    <location>
        <begin position="438"/>
        <end position="440"/>
    </location>
</feature>
<feature type="helix" evidence="19">
    <location>
        <begin position="445"/>
        <end position="462"/>
    </location>
</feature>
<feature type="strand" evidence="19">
    <location>
        <begin position="463"/>
        <end position="467"/>
    </location>
</feature>
<feature type="strand" evidence="19">
    <location>
        <begin position="480"/>
        <end position="482"/>
    </location>
</feature>
<feature type="strand" evidence="19">
    <location>
        <begin position="484"/>
        <end position="487"/>
    </location>
</feature>
<feature type="strand" evidence="19">
    <location>
        <begin position="490"/>
        <end position="495"/>
    </location>
</feature>
<name>CP3A7_HUMAN</name>
<organism>
    <name type="scientific">Homo sapiens</name>
    <name type="common">Human</name>
    <dbReference type="NCBI Taxonomy" id="9606"/>
    <lineage>
        <taxon>Eukaryota</taxon>
        <taxon>Metazoa</taxon>
        <taxon>Chordata</taxon>
        <taxon>Craniata</taxon>
        <taxon>Vertebrata</taxon>
        <taxon>Euteleostomi</taxon>
        <taxon>Mammalia</taxon>
        <taxon>Eutheria</taxon>
        <taxon>Euarchontoglires</taxon>
        <taxon>Primates</taxon>
        <taxon>Haplorrhini</taxon>
        <taxon>Catarrhini</taxon>
        <taxon>Hominidae</taxon>
        <taxon>Homo</taxon>
    </lineage>
</organism>
<protein>
    <recommendedName>
        <fullName evidence="9">Cytochrome P450 3A7</fullName>
        <ecNumber evidence="2 3 4">1.14.14.1</ecNumber>
    </recommendedName>
    <alternativeName>
        <fullName>CYPIIIA7</fullName>
    </alternativeName>
    <alternativeName>
        <fullName evidence="10">Cytochrome P450-HFLA</fullName>
    </alternativeName>
    <alternativeName>
        <fullName evidence="10">P450HLp2</fullName>
    </alternativeName>
</protein>
<reference key="1">
    <citation type="journal article" date="1989" name="J. Biochem.">
        <title>Molecular cloning and sequence analysis of cDNA containing the entire coding region for human fetal liver cytochrome P-450.</title>
        <authorList>
            <person name="Komori M."/>
            <person name="Nishio K."/>
            <person name="Ohi H."/>
            <person name="Kitada M."/>
            <person name="Kamataki T."/>
        </authorList>
    </citation>
    <scope>NUCLEOTIDE SEQUENCE [MRNA] (ISOFORM 1)</scope>
    <source>
        <tissue>Fetal liver</tissue>
    </source>
</reference>
<reference key="2">
    <citation type="journal article" date="2000" name="Gene">
        <title>The human cytochrome P450 3A locus. Gene evolution by capture of downstream exons.</title>
        <authorList>
            <person name="Finta C."/>
            <person name="Zaphiropoulos P.G."/>
        </authorList>
    </citation>
    <scope>NUCLEOTIDE SEQUENCE [MRNA] (ISOFORM 2)</scope>
</reference>
<reference key="3">
    <citation type="journal article" date="2001" name="Pharmacogenetics">
        <title>Genomic organization of the human CYP3A locus: identification of a new, inducible CYP3A gene.</title>
        <authorList>
            <person name="Gellner K."/>
            <person name="Eiselt R."/>
            <person name="Hustert E."/>
            <person name="Arnold H."/>
            <person name="Koch I."/>
            <person name="Haberl M."/>
            <person name="Deglmann C.J."/>
            <person name="Burk O."/>
            <person name="Buntefuss D."/>
            <person name="Escher S."/>
            <person name="Bishop C."/>
            <person name="Koebe H.-G."/>
            <person name="Brinkmann U."/>
            <person name="Klenk H.-P."/>
            <person name="Kleine K."/>
            <person name="Meyer U.A."/>
            <person name="Wojnowski L."/>
        </authorList>
    </citation>
    <scope>NUCLEOTIDE SEQUENCE [GENOMIC DNA]</scope>
</reference>
<reference key="4">
    <citation type="journal article" date="2003" name="Science">
        <title>Human chromosome 7: DNA sequence and biology.</title>
        <authorList>
            <person name="Scherer S.W."/>
            <person name="Cheung J."/>
            <person name="MacDonald J.R."/>
            <person name="Osborne L.R."/>
            <person name="Nakabayashi K."/>
            <person name="Herbrick J.-A."/>
            <person name="Carson A.R."/>
            <person name="Parker-Katiraee L."/>
            <person name="Skaug J."/>
            <person name="Khaja R."/>
            <person name="Zhang J."/>
            <person name="Hudek A.K."/>
            <person name="Li M."/>
            <person name="Haddad M."/>
            <person name="Duggan G.E."/>
            <person name="Fernandez B.A."/>
            <person name="Kanematsu E."/>
            <person name="Gentles S."/>
            <person name="Christopoulos C.C."/>
            <person name="Choufani S."/>
            <person name="Kwasnicka D."/>
            <person name="Zheng X.H."/>
            <person name="Lai Z."/>
            <person name="Nusskern D.R."/>
            <person name="Zhang Q."/>
            <person name="Gu Z."/>
            <person name="Lu F."/>
            <person name="Zeesman S."/>
            <person name="Nowaczyk M.J."/>
            <person name="Teshima I."/>
            <person name="Chitayat D."/>
            <person name="Shuman C."/>
            <person name="Weksberg R."/>
            <person name="Zackai E.H."/>
            <person name="Grebe T.A."/>
            <person name="Cox S.R."/>
            <person name="Kirkpatrick S.J."/>
            <person name="Rahman N."/>
            <person name="Friedman J.M."/>
            <person name="Heng H.H.Q."/>
            <person name="Pelicci P.G."/>
            <person name="Lo-Coco F."/>
            <person name="Belloni E."/>
            <person name="Shaffer L.G."/>
            <person name="Pober B."/>
            <person name="Morton C.C."/>
            <person name="Gusella J.F."/>
            <person name="Bruns G.A.P."/>
            <person name="Korf B.R."/>
            <person name="Quade B.J."/>
            <person name="Ligon A.H."/>
            <person name="Ferguson H."/>
            <person name="Higgins A.W."/>
            <person name="Leach N.T."/>
            <person name="Herrick S.R."/>
            <person name="Lemyre E."/>
            <person name="Farra C.G."/>
            <person name="Kim H.-G."/>
            <person name="Summers A.M."/>
            <person name="Gripp K.W."/>
            <person name="Roberts W."/>
            <person name="Szatmari P."/>
            <person name="Winsor E.J.T."/>
            <person name="Grzeschik K.-H."/>
            <person name="Teebi A."/>
            <person name="Minassian B.A."/>
            <person name="Kere J."/>
            <person name="Armengol L."/>
            <person name="Pujana M.A."/>
            <person name="Estivill X."/>
            <person name="Wilson M.D."/>
            <person name="Koop B.F."/>
            <person name="Tosi S."/>
            <person name="Moore G.E."/>
            <person name="Boright A.P."/>
            <person name="Zlotorynski E."/>
            <person name="Kerem B."/>
            <person name="Kroisel P.M."/>
            <person name="Petek E."/>
            <person name="Oscier D.G."/>
            <person name="Mould S.J."/>
            <person name="Doehner H."/>
            <person name="Doehner K."/>
            <person name="Rommens J.M."/>
            <person name="Vincent J.B."/>
            <person name="Venter J.C."/>
            <person name="Li P.W."/>
            <person name="Mural R.J."/>
            <person name="Adams M.D."/>
            <person name="Tsui L.-C."/>
        </authorList>
    </citation>
    <scope>NUCLEOTIDE SEQUENCE [LARGE SCALE GENOMIC DNA]</scope>
</reference>
<reference key="5">
    <citation type="submission" date="2005-09" db="EMBL/GenBank/DDBJ databases">
        <authorList>
            <person name="Mural R.J."/>
            <person name="Istrail S."/>
            <person name="Sutton G.G."/>
            <person name="Florea L."/>
            <person name="Halpern A.L."/>
            <person name="Mobarry C.M."/>
            <person name="Lippert R."/>
            <person name="Walenz B."/>
            <person name="Shatkay H."/>
            <person name="Dew I."/>
            <person name="Miller J.R."/>
            <person name="Flanigan M.J."/>
            <person name="Edwards N.J."/>
            <person name="Bolanos R."/>
            <person name="Fasulo D."/>
            <person name="Halldorsson B.V."/>
            <person name="Hannenhalli S."/>
            <person name="Turner R."/>
            <person name="Yooseph S."/>
            <person name="Lu F."/>
            <person name="Nusskern D.R."/>
            <person name="Shue B.C."/>
            <person name="Zheng X.H."/>
            <person name="Zhong F."/>
            <person name="Delcher A.L."/>
            <person name="Huson D.H."/>
            <person name="Kravitz S.A."/>
            <person name="Mouchard L."/>
            <person name="Reinert K."/>
            <person name="Remington K.A."/>
            <person name="Clark A.G."/>
            <person name="Waterman M.S."/>
            <person name="Eichler E.E."/>
            <person name="Adams M.D."/>
            <person name="Hunkapiller M.W."/>
            <person name="Myers E.W."/>
            <person name="Venter J.C."/>
        </authorList>
    </citation>
    <scope>NUCLEOTIDE SEQUENCE [LARGE SCALE GENOMIC DNA]</scope>
</reference>
<reference key="6">
    <citation type="journal article" date="2004" name="Genome Res.">
        <title>The status, quality, and expansion of the NIH full-length cDNA project: the Mammalian Gene Collection (MGC).</title>
        <authorList>
            <consortium name="The MGC Project Team"/>
        </authorList>
    </citation>
    <scope>NUCLEOTIDE SEQUENCE [LARGE SCALE MRNA] (ISOFORM 1)</scope>
</reference>
<reference key="7">
    <citation type="journal article" date="1989" name="Arch. Biochem. Biophys.">
        <title>Isolation and characterization of human fetal liver cytochrome P450HLp2: a third member of the P450III gene family.</title>
        <authorList>
            <person name="Wrighton S.A."/>
            <person name="Vandenbranden M."/>
        </authorList>
    </citation>
    <scope>PROTEIN SEQUENCE OF 1-30</scope>
    <scope>TISSUE SPECIFICITY</scope>
    <scope>SUBCELLULAR LOCATION</scope>
    <source>
        <tissue>Fetal liver</tissue>
    </source>
</reference>
<reference key="8">
    <citation type="journal article" date="1989" name="Arch. Biochem. Biophys.">
        <title>Isolation of a new human fetal liver cytochrome P450 cDNA clone: evidence for expression of a limited number of forms of cytochrome P450 in human fetal livers.</title>
        <authorList>
            <person name="Komori M."/>
            <person name="Nishio K."/>
            <person name="Fujitani T."/>
            <person name="Ohi H."/>
            <person name="Kitada M."/>
            <person name="Mima S."/>
            <person name="Itahashi K."/>
            <person name="Kamataki T."/>
        </authorList>
    </citation>
    <scope>NUCLEOTIDE SEQUENCE [MRNA] OF 282-503 (ISOFORM 1)</scope>
    <source>
        <tissue>Fetal liver</tissue>
    </source>
</reference>
<reference key="9">
    <citation type="journal article" date="1998" name="Biochim. Biophys. Acta">
        <title>Differential catalytic properties in metabolism of endogenous and exogenous substrates among CYP3A enzymes expressed in COS-7 cells.</title>
        <authorList>
            <person name="Ohmori S."/>
            <person name="Nakasa H."/>
            <person name="Asanome K."/>
            <person name="Kurose Y."/>
            <person name="Ishii I."/>
            <person name="Hosokawa M."/>
            <person name="Kitada M."/>
        </authorList>
    </citation>
    <scope>FUNCTION</scope>
    <scope>CATALYTIC ACTIVITY</scope>
</reference>
<reference key="10">
    <citation type="journal article" date="2000" name="Mol. Pharmacol.">
        <title>Identification of human cytochrome P450s involved in the formation of all-trans-retinoic acid principal metabolites.</title>
        <authorList>
            <person name="Marill J."/>
            <person name="Cresteil T."/>
            <person name="Lanotte M."/>
            <person name="Chabot G.G."/>
        </authorList>
    </citation>
    <scope>FUNCTION</scope>
    <scope>CATALYTIC ACTIVITY</scope>
    <scope>BIOPHYSICOCHEMICAL PROPERTIES</scope>
    <scope>PATHWAY</scope>
</reference>
<reference key="11">
    <citation type="journal article" date="2003" name="Cancer Res.">
        <title>Human cytochrome P450 3A7 has a distinct high catalytic activity for the 16alpha-hydroxylation of estrone but not 17beta-estradiol.</title>
        <authorList>
            <person name="Lee A.J."/>
            <person name="Conney A.H."/>
            <person name="Zhu B.T."/>
        </authorList>
    </citation>
    <scope>FUNCTION</scope>
    <scope>CATALYTIC ACTIVITY</scope>
    <scope>BIOPHYSICOCHEMICAL PROPERTIES</scope>
    <scope>PATHWAY</scope>
</reference>
<reference key="12">
    <citation type="journal article" date="2003" name="Endocrinology">
        <title>Characterization of the oxidative metabolites of 17beta-estradiol and estrone formed by 15 selectively expressed human cytochrome p450 isoforms.</title>
        <authorList>
            <person name="Lee A.J."/>
            <person name="Cai M.X."/>
            <person name="Thomas P.E."/>
            <person name="Conney A.H."/>
            <person name="Zhu B.T."/>
        </authorList>
    </citation>
    <scope>FUNCTION</scope>
    <scope>CATALYTIC ACTIVITY</scope>
    <scope>PATHWAY</scope>
</reference>
<reference key="13">
    <citation type="journal article" date="2007" name="Drug Metab. Dispos.">
        <title>Helices F-G are important for the substrate specificities of CYP3A7.</title>
        <authorList>
            <person name="Torimoto N."/>
            <person name="Ishii I."/>
            <person name="Toyama K."/>
            <person name="Hata M."/>
            <person name="Tanaka K."/>
            <person name="Shimomura H."/>
            <person name="Nakamura H."/>
            <person name="Ariyoshi N."/>
            <person name="Ohmori S."/>
            <person name="Kitada M."/>
        </authorList>
    </citation>
    <scope>FUNCTION</scope>
    <scope>CATALYTIC ACTIVITY</scope>
    <scope>BIOPHYSICOCHEMICAL PROPERTIES</scope>
    <scope>PATHWAY</scope>
    <scope>MUTAGENESIS OF ASN-116; HIS-174; ASN-214; LYS-224; LYS-244 AND LYS-262</scope>
</reference>
<comment type="function">
    <text evidence="2 3 4 5 7">A cytochrome P450 monooxygenase involved in the metabolism of steroid hormones and vitamins during embryogenesis (PubMed:11093772, PubMed:12865317, PubMed:14559847, PubMed:17178770, PubMed:9555064). Mechanistically, uses molecular oxygen inserting one oxygen atom into a substrate, and reducing the second into a water molecule, with two electrons provided by NADPH via cytochrome P450 reductase (NADPH--hemoprotein reductase) (PubMed:11093772, PubMed:12865317, PubMed:14559847, PubMed:17178770, PubMed:9555064). Catalyzes the hydroxylation of carbon-hydrogen bonds. Metabolizes 3beta-hydroxyandrost-5-en-17-one (dehydroepiandrosterone, DHEA), a precursor in the biosynthesis of androgen and estrogen steroid hormones (PubMed:17178770, PubMed:9555064). Exhibits high catalytic activity for the formation of hydroxyestrogens from estrone (E1), particularly D-ring hydroxylated estrone at the C16-alpha position (PubMed:12865317, PubMed:14559847). Mainly hydroxylates all trans-retinoic acid (atRA) to 4-hydroxyretinoate and may play a role in atRA clearance during fetal development (PubMed:11093772). Also involved in the oxidative metabolism of xenobiotics including anticonvulsants (PubMed:9555064).</text>
</comment>
<comment type="catalytic activity">
    <reaction evidence="2 3 4">
        <text>an organic molecule + reduced [NADPH--hemoprotein reductase] + O2 = an alcohol + oxidized [NADPH--hemoprotein reductase] + H2O + H(+)</text>
        <dbReference type="Rhea" id="RHEA:17149"/>
        <dbReference type="Rhea" id="RHEA-COMP:11964"/>
        <dbReference type="Rhea" id="RHEA-COMP:11965"/>
        <dbReference type="ChEBI" id="CHEBI:15377"/>
        <dbReference type="ChEBI" id="CHEBI:15378"/>
        <dbReference type="ChEBI" id="CHEBI:15379"/>
        <dbReference type="ChEBI" id="CHEBI:30879"/>
        <dbReference type="ChEBI" id="CHEBI:57618"/>
        <dbReference type="ChEBI" id="CHEBI:58210"/>
        <dbReference type="ChEBI" id="CHEBI:142491"/>
        <dbReference type="EC" id="1.14.14.1"/>
    </reaction>
    <physiologicalReaction direction="left-to-right" evidence="12 13 14">
        <dbReference type="Rhea" id="RHEA:17150"/>
    </physiologicalReaction>
</comment>
<comment type="catalytic activity">
    <reaction evidence="5 7">
        <text>3beta-hydroxyandrost-5-en-17-one + reduced [NADPH--hemoprotein reductase] + O2 = 3beta,16alpha-dihydroxy-androst-5-en-17-one + oxidized [NADPH--hemoprotein reductase] + H2O + H(+)</text>
        <dbReference type="Rhea" id="RHEA:47220"/>
        <dbReference type="Rhea" id="RHEA-COMP:11964"/>
        <dbReference type="Rhea" id="RHEA-COMP:11965"/>
        <dbReference type="ChEBI" id="CHEBI:15377"/>
        <dbReference type="ChEBI" id="CHEBI:15378"/>
        <dbReference type="ChEBI" id="CHEBI:15379"/>
        <dbReference type="ChEBI" id="CHEBI:27771"/>
        <dbReference type="ChEBI" id="CHEBI:28689"/>
        <dbReference type="ChEBI" id="CHEBI:57618"/>
        <dbReference type="ChEBI" id="CHEBI:58210"/>
    </reaction>
    <physiologicalReaction direction="left-to-right" evidence="15 17">
        <dbReference type="Rhea" id="RHEA:47221"/>
    </physiologicalReaction>
</comment>
<comment type="catalytic activity">
    <reaction evidence="5 7">
        <text>dehydroepiandrosterone 3-sulfate + reduced [NADPH--hemoprotein reductase] + O2 = 16alpha-hydroxydehydroepiandrosterone 3-sulfate + oxidized [NADPH--hemoprotein reductase] + H2O + H(+)</text>
        <dbReference type="Rhea" id="RHEA:47224"/>
        <dbReference type="Rhea" id="RHEA-COMP:11964"/>
        <dbReference type="Rhea" id="RHEA-COMP:11965"/>
        <dbReference type="ChEBI" id="CHEBI:15377"/>
        <dbReference type="ChEBI" id="CHEBI:15378"/>
        <dbReference type="ChEBI" id="CHEBI:15379"/>
        <dbReference type="ChEBI" id="CHEBI:57618"/>
        <dbReference type="ChEBI" id="CHEBI:57905"/>
        <dbReference type="ChEBI" id="CHEBI:58210"/>
        <dbReference type="ChEBI" id="CHEBI:87538"/>
    </reaction>
    <physiologicalReaction direction="left-to-right" evidence="15 17">
        <dbReference type="Rhea" id="RHEA:47225"/>
    </physiologicalReaction>
</comment>
<comment type="catalytic activity">
    <reaction evidence="7">
        <text>testosterone + reduced [NADPH--hemoprotein reductase] + O2 = 6beta,17beta-dihydroxyandrost-4-en-3-one + oxidized [NADPH--hemoprotein reductase] + H2O + H(+)</text>
        <dbReference type="Rhea" id="RHEA:46296"/>
        <dbReference type="Rhea" id="RHEA-COMP:11964"/>
        <dbReference type="Rhea" id="RHEA-COMP:11965"/>
        <dbReference type="ChEBI" id="CHEBI:15377"/>
        <dbReference type="ChEBI" id="CHEBI:15378"/>
        <dbReference type="ChEBI" id="CHEBI:15379"/>
        <dbReference type="ChEBI" id="CHEBI:17347"/>
        <dbReference type="ChEBI" id="CHEBI:34477"/>
        <dbReference type="ChEBI" id="CHEBI:57618"/>
        <dbReference type="ChEBI" id="CHEBI:58210"/>
    </reaction>
    <physiologicalReaction direction="left-to-right" evidence="17">
        <dbReference type="Rhea" id="RHEA:46297"/>
    </physiologicalReaction>
</comment>
<comment type="catalytic activity">
    <reaction evidence="3 4">
        <text>estrone + reduced [NADPH--hemoprotein reductase] + O2 = 2-hydroxyestrone + oxidized [NADPH--hemoprotein reductase] + H2O + H(+)</text>
        <dbReference type="Rhea" id="RHEA:47208"/>
        <dbReference type="Rhea" id="RHEA-COMP:11964"/>
        <dbReference type="Rhea" id="RHEA-COMP:11965"/>
        <dbReference type="ChEBI" id="CHEBI:1156"/>
        <dbReference type="ChEBI" id="CHEBI:15377"/>
        <dbReference type="ChEBI" id="CHEBI:15378"/>
        <dbReference type="ChEBI" id="CHEBI:15379"/>
        <dbReference type="ChEBI" id="CHEBI:17263"/>
        <dbReference type="ChEBI" id="CHEBI:57618"/>
        <dbReference type="ChEBI" id="CHEBI:58210"/>
    </reaction>
    <physiologicalReaction direction="left-to-right" evidence="13 14">
        <dbReference type="Rhea" id="RHEA:47209"/>
    </physiologicalReaction>
</comment>
<comment type="catalytic activity">
    <reaction evidence="4">
        <text>estrone + reduced [NADPH--hemoprotein reductase] + O2 = 4-hydroxyestrone + oxidized [NADPH--hemoprotein reductase] + H2O + H(+)</text>
        <dbReference type="Rhea" id="RHEA:47292"/>
        <dbReference type="Rhea" id="RHEA-COMP:11964"/>
        <dbReference type="Rhea" id="RHEA-COMP:11965"/>
        <dbReference type="ChEBI" id="CHEBI:15377"/>
        <dbReference type="ChEBI" id="CHEBI:15378"/>
        <dbReference type="ChEBI" id="CHEBI:15379"/>
        <dbReference type="ChEBI" id="CHEBI:17263"/>
        <dbReference type="ChEBI" id="CHEBI:57618"/>
        <dbReference type="ChEBI" id="CHEBI:58210"/>
        <dbReference type="ChEBI" id="CHEBI:87602"/>
    </reaction>
    <physiologicalReaction direction="left-to-right" evidence="14">
        <dbReference type="Rhea" id="RHEA:47293"/>
    </physiologicalReaction>
</comment>
<comment type="catalytic activity">
    <reaction evidence="3 4">
        <text>estrone + reduced [NADPH--hemoprotein reductase] + O2 = 16alpha-hydroxyestrone + oxidized [NADPH--hemoprotein reductase] + H2O + H(+)</text>
        <dbReference type="Rhea" id="RHEA:47204"/>
        <dbReference type="Rhea" id="RHEA-COMP:11964"/>
        <dbReference type="Rhea" id="RHEA-COMP:11965"/>
        <dbReference type="ChEBI" id="CHEBI:776"/>
        <dbReference type="ChEBI" id="CHEBI:15377"/>
        <dbReference type="ChEBI" id="CHEBI:15378"/>
        <dbReference type="ChEBI" id="CHEBI:15379"/>
        <dbReference type="ChEBI" id="CHEBI:17263"/>
        <dbReference type="ChEBI" id="CHEBI:57618"/>
        <dbReference type="ChEBI" id="CHEBI:58210"/>
    </reaction>
    <physiologicalReaction direction="left-to-right" evidence="13 14">
        <dbReference type="Rhea" id="RHEA:47205"/>
    </physiologicalReaction>
</comment>
<comment type="catalytic activity">
    <reaction evidence="3 4">
        <text>17beta-estradiol + reduced [NADPH--hemoprotein reductase] + O2 = 2-hydroxy-17beta-estradiol + oxidized [NADPH--hemoprotein reductase] + H2O + H(+)</text>
        <dbReference type="Rhea" id="RHEA:47212"/>
        <dbReference type="Rhea" id="RHEA-COMP:11964"/>
        <dbReference type="Rhea" id="RHEA-COMP:11965"/>
        <dbReference type="ChEBI" id="CHEBI:15377"/>
        <dbReference type="ChEBI" id="CHEBI:15378"/>
        <dbReference type="ChEBI" id="CHEBI:15379"/>
        <dbReference type="ChEBI" id="CHEBI:16469"/>
        <dbReference type="ChEBI" id="CHEBI:28744"/>
        <dbReference type="ChEBI" id="CHEBI:57618"/>
        <dbReference type="ChEBI" id="CHEBI:58210"/>
    </reaction>
    <physiologicalReaction direction="left-to-right" evidence="13 14">
        <dbReference type="Rhea" id="RHEA:47213"/>
    </physiologicalReaction>
</comment>
<comment type="catalytic activity">
    <reaction evidence="3 4">
        <text>17beta-estradiol + reduced [NADPH--hemoprotein reductase] + O2 = 6beta-hydroxyestradiol-17beta + oxidized [NADPH--hemoprotein reductase] + H2O + H(+)</text>
        <dbReference type="Rhea" id="RHEA:47216"/>
        <dbReference type="Rhea" id="RHEA-COMP:11964"/>
        <dbReference type="Rhea" id="RHEA-COMP:11965"/>
        <dbReference type="ChEBI" id="CHEBI:15377"/>
        <dbReference type="ChEBI" id="CHEBI:15378"/>
        <dbReference type="ChEBI" id="CHEBI:15379"/>
        <dbReference type="ChEBI" id="CHEBI:16469"/>
        <dbReference type="ChEBI" id="CHEBI:16784"/>
        <dbReference type="ChEBI" id="CHEBI:57618"/>
        <dbReference type="ChEBI" id="CHEBI:58210"/>
    </reaction>
    <physiologicalReaction direction="left-to-right" evidence="13 14">
        <dbReference type="Rhea" id="RHEA:47217"/>
    </physiologicalReaction>
</comment>
<comment type="catalytic activity">
    <reaction evidence="2">
        <text>all-trans-retinoate + reduced [NADPH--hemoprotein reductase] + O2 = all-trans-4-hydroxyretinoate + oxidized [NADPH--hemoprotein reductase] + H2O + H(+)</text>
        <dbReference type="Rhea" id="RHEA:51984"/>
        <dbReference type="Rhea" id="RHEA-COMP:11964"/>
        <dbReference type="Rhea" id="RHEA-COMP:11965"/>
        <dbReference type="ChEBI" id="CHEBI:15377"/>
        <dbReference type="ChEBI" id="CHEBI:15378"/>
        <dbReference type="ChEBI" id="CHEBI:15379"/>
        <dbReference type="ChEBI" id="CHEBI:35291"/>
        <dbReference type="ChEBI" id="CHEBI:57618"/>
        <dbReference type="ChEBI" id="CHEBI:58210"/>
        <dbReference type="ChEBI" id="CHEBI:134178"/>
    </reaction>
    <physiologicalReaction direction="left-to-right" evidence="12">
        <dbReference type="Rhea" id="RHEA:51985"/>
    </physiologicalReaction>
</comment>
<comment type="catalytic activity">
    <reaction evidence="2">
        <text>all-trans-retinoate + reduced [NADPH--hemoprotein reductase] + O2 = all-trans-18-hydroxyretinoate + oxidized [NADPH--hemoprotein reductase] + H2O + H(+)</text>
        <dbReference type="Rhea" id="RHEA:55856"/>
        <dbReference type="Rhea" id="RHEA-COMP:11964"/>
        <dbReference type="Rhea" id="RHEA-COMP:11965"/>
        <dbReference type="ChEBI" id="CHEBI:15377"/>
        <dbReference type="ChEBI" id="CHEBI:15378"/>
        <dbReference type="ChEBI" id="CHEBI:15379"/>
        <dbReference type="ChEBI" id="CHEBI:35291"/>
        <dbReference type="ChEBI" id="CHEBI:57618"/>
        <dbReference type="ChEBI" id="CHEBI:58210"/>
        <dbReference type="ChEBI" id="CHEBI:139258"/>
    </reaction>
    <physiologicalReaction direction="left-to-right" evidence="12">
        <dbReference type="Rhea" id="RHEA:55857"/>
    </physiologicalReaction>
</comment>
<comment type="cofactor">
    <cofactor evidence="1">
        <name>heme</name>
        <dbReference type="ChEBI" id="CHEBI:30413"/>
    </cofactor>
</comment>
<comment type="biophysicochemical properties">
    <kinetics>
        <KM evidence="4">10 uM for estrone (16-alpha hydroxylation)</KM>
        <KM evidence="4">10 uM for estrone (2-hydroxylation)</KM>
        <KM evidence="4">25.3 uM for estrone (4-hydroxylation)</KM>
        <KM evidence="4">33.5 uM for 17beta-estradiol (2-hydroxylation)</KM>
        <KM evidence="2">15 uM for all-trans-retinoate (4-hydroxylation)</KM>
        <KM evidence="2">5 uM for all-trans-retinoate (18-hydroxylation)</KM>
        <KM evidence="5">14.8 uM for 3beta-hydroxyandrost-5-en-17-one (16-alpha hydroxylation)</KM>
        <KM evidence="5">18.5 uM for 3beta-sulfooxy-androst-5-en-17-one (16-alpha hydroxylation)</KM>
        <Vmax evidence="4">1423.0 pmol/min/nmol enzyme toward estrone (16-alpha hydroxylation)</Vmax>
        <Vmax evidence="4">2109.0 pmol/min/nmol enzyme toward estrone (2-hydroxylation)</Vmax>
        <Vmax evidence="4">328.0 pmol/min/nmol enzyme toward estrone (4-hydroxylation)</Vmax>
        <Vmax evidence="4">616.0 pmol/min/nmol enzyme toward 17beta-estradiol (2-hydroxylation)</Vmax>
        <Vmax evidence="2">1869.0 pmol/min/nmol enzyme toward all-trans-retinoate (4-hydroxylation)</Vmax>
        <Vmax evidence="2">52.0 pmol/min/nmol enzyme toward all-trans-retinoate (18-hydroxylation)</Vmax>
        <Vmax evidence="5">20.8 nmol/min/nmol enzyme toward 3beta-hydroxyandrost-5-en-17-one (16-alpha hydroxylation)</Vmax>
        <Vmax evidence="5">6.5 nmol/min/nmol enzyme toward 3beta-sulfooxy-androst-5-en-17-one (16-alpha hydroxylation)</Vmax>
    </kinetics>
</comment>
<comment type="pathway">
    <text evidence="3 4 5">Steroid hormone biosynthesis.</text>
</comment>
<comment type="pathway">
    <text evidence="2">Cofactor metabolism; retinol metabolism.</text>
</comment>
<comment type="subcellular location">
    <subcellularLocation>
        <location>Endoplasmic reticulum membrane</location>
        <topology>Peripheral membrane protein</topology>
    </subcellularLocation>
    <subcellularLocation>
        <location evidence="16">Microsome membrane</location>
        <topology>Peripheral membrane protein</topology>
    </subcellularLocation>
</comment>
<comment type="alternative products">
    <event type="alternative splicing"/>
    <isoform>
        <id>P24462-1</id>
        <name>1</name>
        <sequence type="displayed"/>
    </isoform>
    <isoform>
        <id>P24462-2</id>
        <name>2</name>
        <sequence type="described" ref="VSP_055577"/>
    </isoform>
</comment>
<comment type="tissue specificity">
    <text evidence="6">Expressed in fetal liver (at protein level).</text>
</comment>
<comment type="similarity">
    <text evidence="11">Belongs to the cytochrome P450 family.</text>
</comment>
<comment type="online information" name="PharmVar Pharmacogen Variation Consortium">
    <link uri="https://www.pharmvar.org/gene/CYP3A7"/>
    <text>CYP3A7 alleles</text>
</comment>
<evidence type="ECO:0000250" key="1"/>
<evidence type="ECO:0000269" key="2">
    <source>
    </source>
</evidence>
<evidence type="ECO:0000269" key="3">
    <source>
    </source>
</evidence>
<evidence type="ECO:0000269" key="4">
    <source>
    </source>
</evidence>
<evidence type="ECO:0000269" key="5">
    <source>
    </source>
</evidence>
<evidence type="ECO:0000269" key="6">
    <source>
    </source>
</evidence>
<evidence type="ECO:0000269" key="7">
    <source>
    </source>
</evidence>
<evidence type="ECO:0000303" key="8">
    <source>
    </source>
</evidence>
<evidence type="ECO:0000303" key="9">
    <source>
    </source>
</evidence>
<evidence type="ECO:0000303" key="10">
    <source>
    </source>
</evidence>
<evidence type="ECO:0000305" key="11"/>
<evidence type="ECO:0000305" key="12">
    <source>
    </source>
</evidence>
<evidence type="ECO:0000305" key="13">
    <source>
    </source>
</evidence>
<evidence type="ECO:0000305" key="14">
    <source>
    </source>
</evidence>
<evidence type="ECO:0000305" key="15">
    <source>
    </source>
</evidence>
<evidence type="ECO:0000305" key="16">
    <source>
    </source>
</evidence>
<evidence type="ECO:0000305" key="17">
    <source>
    </source>
</evidence>
<evidence type="ECO:0000312" key="18">
    <source>
        <dbReference type="HGNC" id="HGNC:2640"/>
    </source>
</evidence>
<evidence type="ECO:0007829" key="19">
    <source>
        <dbReference type="PDB" id="7MK8"/>
    </source>
</evidence>